<sequence length="139" mass="14885">MLRTMLKSKIHRATVTCADLHYVGSVTIDADLMDAADLLEGEQVTIVDIDNGARLVTYAITGERGSGVIGINGAAAHLVHPGDLVILIAYATMDDARARTYQPRIVFVDAYNKPIDMGHDPAFVPENAGELLDPRLGVG</sequence>
<keyword id="KW-0002">3D-structure</keyword>
<keyword id="KW-0068">Autocatalytic cleavage</keyword>
<keyword id="KW-0963">Cytoplasm</keyword>
<keyword id="KW-0210">Decarboxylase</keyword>
<keyword id="KW-0903">Direct protein sequencing</keyword>
<keyword id="KW-0456">Lyase</keyword>
<keyword id="KW-0566">Pantothenate biosynthesis</keyword>
<keyword id="KW-0670">Pyruvate</keyword>
<keyword id="KW-1185">Reference proteome</keyword>
<keyword id="KW-0704">Schiff base</keyword>
<keyword id="KW-0843">Virulence</keyword>
<keyword id="KW-0865">Zymogen</keyword>
<protein>
    <recommendedName>
        <fullName evidence="1">Aspartate 1-decarboxylase</fullName>
        <ecNumber evidence="1 2">4.1.1.11</ecNumber>
    </recommendedName>
    <alternativeName>
        <fullName evidence="1">Aspartate alpha-decarboxylase</fullName>
    </alternativeName>
    <component>
        <recommendedName>
            <fullName evidence="1">Aspartate 1-decarboxylase beta chain</fullName>
        </recommendedName>
    </component>
    <component>
        <recommendedName>
            <fullName evidence="1">Aspartate 1-decarboxylase alpha chain</fullName>
        </recommendedName>
    </component>
</protein>
<evidence type="ECO:0000255" key="1">
    <source>
        <dbReference type="HAMAP-Rule" id="MF_00446"/>
    </source>
</evidence>
<evidence type="ECO:0000269" key="2">
    <source>
    </source>
</evidence>
<evidence type="ECO:0000269" key="3">
    <source>
    </source>
</evidence>
<evidence type="ECO:0000269" key="4">
    <source>
    </source>
</evidence>
<evidence type="ECO:0000269" key="5">
    <source>
    </source>
</evidence>
<evidence type="ECO:0000269" key="6">
    <source>
    </source>
</evidence>
<evidence type="ECO:0000305" key="7">
    <source>
    </source>
</evidence>
<evidence type="ECO:0007829" key="8">
    <source>
        <dbReference type="PDB" id="2C45"/>
    </source>
</evidence>
<proteinExistence type="evidence at protein level"/>
<comment type="function">
    <text evidence="1 7">Catalyzes the pyruvoyl-dependent decarboxylation of aspartate to produce beta-alanine.</text>
</comment>
<comment type="function">
    <text evidence="6">Overexpression of wild-type protein confers resistance to pyrazinoic acid (POA), the active form of the anti-tuberculosis prodrug pyrazinamide (PZA).</text>
</comment>
<comment type="catalytic activity">
    <reaction evidence="1 2">
        <text>L-aspartate + H(+) = beta-alanine + CO2</text>
        <dbReference type="Rhea" id="RHEA:19497"/>
        <dbReference type="ChEBI" id="CHEBI:15378"/>
        <dbReference type="ChEBI" id="CHEBI:16526"/>
        <dbReference type="ChEBI" id="CHEBI:29991"/>
        <dbReference type="ChEBI" id="CHEBI:57966"/>
        <dbReference type="EC" id="4.1.1.11"/>
    </reaction>
</comment>
<comment type="cofactor">
    <cofactor evidence="1">
        <name>pyruvate</name>
        <dbReference type="ChEBI" id="CHEBI:15361"/>
    </cofactor>
    <text evidence="1">Binds 1 pyruvoyl group covalently per subunit.</text>
</comment>
<comment type="biophysicochemical properties">
    <kinetics>
        <KM evidence="2">219.6 uM for L-aspartate</KM>
        <text evidence="2">kcat is 0.65 sec(-1), specific activity 2100 nmol/min/mg for L-aspartate.</text>
    </kinetics>
</comment>
<comment type="pathway">
    <text evidence="1">Cofactor biosynthesis; (R)-pantothenate biosynthesis; beta-alanine from L-aspartate: step 1/1.</text>
</comment>
<comment type="subunit">
    <text evidence="1 7">Heterooctamer of four alpha and four beta subunits.</text>
</comment>
<comment type="subcellular location">
    <subcellularLocation>
        <location evidence="1 7">Cytoplasm</location>
    </subcellularLocation>
</comment>
<comment type="PTM">
    <text evidence="1 7">Is synthesized initially as an inactive proenzyme, which is activated by self-cleavage at a specific serine bond to produce a beta-subunit with a hydroxyl group at its C-terminus and an alpha-subunit with a pyruvoyl group at its N-terminus. Cleavage is not necessary for tetramerization upon expression in E.coli; protein expressed in E.coli is fully process in vitro after 48 hours at 37 degrees Celsius (PubMed:12182836).</text>
</comment>
<comment type="disruption phenotype">
    <text evidence="3 4">Simultaneous disruption of panD and panC gives a mutant unable to grow in the absence of panothenate. The double mutant has a highly attenuated disease response in BALB/c and SCID mice; immunocompromised BALB/c SCID mice survive on average 36 weeks as opposed to 5 weeks for mice infected with wild-type bacteria, while immunocompetent BALB/c mice survive indefinitely. In wild-type mice bacteria grow for 3 weeks then undergo a steady decline, bacteria persist over 8 months in SCID mice (PubMed:12219086). The double mutant is sensitive to PZA but not POA in liquid culture, beta-alanine but not pantothenate antagonize the effect of PZA at pH 5.8 (PubMed:25246400).</text>
</comment>
<comment type="biotechnology">
    <text evidence="3">Subcutaneous immunization with the double panD and panC bacterial disruption mutant protects mice for over a year against subsequent virulent M.tuberculosis (strain Erdman) infections; mice show mild lung inflammation and fibrosis despite a chronic bacterila infection. This is a promising attenuated vaccine strain.</text>
</comment>
<comment type="miscellaneous">
    <text evidence="4">Pantothenate, pantetheine and beta-alanine containing compounds (all part of the panthothenate/coenzyme A biosynthetic pathway) antagonize PZA and POA antitubercular activity. However cultivation of the double panD and panC mutant with low levels of pantetheine (an intermediate between pantothenate and coenzyme A, at pH 5.8) restores sensitivity to PZA, suggesting PanD is not the PZA target.</text>
</comment>
<comment type="similarity">
    <text evidence="1">Belongs to the PanD family.</text>
</comment>
<accession>P9WIL3</accession>
<accession>L0TDA1</accession>
<accession>O06281</accession>
<accession>P65660</accession>
<reference key="1">
    <citation type="journal article" date="1998" name="Nature">
        <title>Deciphering the biology of Mycobacterium tuberculosis from the complete genome sequence.</title>
        <authorList>
            <person name="Cole S.T."/>
            <person name="Brosch R."/>
            <person name="Parkhill J."/>
            <person name="Garnier T."/>
            <person name="Churcher C.M."/>
            <person name="Harris D.E."/>
            <person name="Gordon S.V."/>
            <person name="Eiglmeier K."/>
            <person name="Gas S."/>
            <person name="Barry C.E. III"/>
            <person name="Tekaia F."/>
            <person name="Badcock K."/>
            <person name="Basham D."/>
            <person name="Brown D."/>
            <person name="Chillingworth T."/>
            <person name="Connor R."/>
            <person name="Davies R.M."/>
            <person name="Devlin K."/>
            <person name="Feltwell T."/>
            <person name="Gentles S."/>
            <person name="Hamlin N."/>
            <person name="Holroyd S."/>
            <person name="Hornsby T."/>
            <person name="Jagels K."/>
            <person name="Krogh A."/>
            <person name="McLean J."/>
            <person name="Moule S."/>
            <person name="Murphy L.D."/>
            <person name="Oliver S."/>
            <person name="Osborne J."/>
            <person name="Quail M.A."/>
            <person name="Rajandream M.A."/>
            <person name="Rogers J."/>
            <person name="Rutter S."/>
            <person name="Seeger K."/>
            <person name="Skelton S."/>
            <person name="Squares S."/>
            <person name="Squares R."/>
            <person name="Sulston J.E."/>
            <person name="Taylor K."/>
            <person name="Whitehead S."/>
            <person name="Barrell B.G."/>
        </authorList>
    </citation>
    <scope>NUCLEOTIDE SEQUENCE [LARGE SCALE GENOMIC DNA]</scope>
    <source>
        <strain>ATCC 25618 / H37Rv</strain>
    </source>
</reference>
<reference key="2">
    <citation type="journal article" date="2002" name="Protein Expr. Purif.">
        <title>Expression, purification, and biochemical characterization of Mycobacterium tuberculosis aspartate decarboxylase, PanD.</title>
        <authorList>
            <person name="Chopra S."/>
            <person name="Pai H."/>
            <person name="Ranganathan A."/>
        </authorList>
    </citation>
    <scope>PROTEIN SEQUENCE OF 26-34</scope>
    <scope>FUNCTION</scope>
    <scope>CATALYTIC ACTIVITY</scope>
    <scope>BIOPHYSICOCHEMICAL PROPERTIES</scope>
    <scope>SUBUNIT</scope>
    <scope>SUBCELLULAR LOCATION</scope>
    <scope>AUTOCLEAVAGE</scope>
    <source>
        <strain>H37Rv</strain>
    </source>
</reference>
<reference key="3">
    <citation type="journal article" date="2002" name="Nat. Med.">
        <title>A pantothenate auxotroph of Mycobacterium tuberculosis is highly attenuated and protects mice against tuberculosis.</title>
        <authorList>
            <person name="Sambandamurthy V.K."/>
            <person name="Wang X."/>
            <person name="Chen B."/>
            <person name="Russell R.G."/>
            <person name="Derrick S."/>
            <person name="Collins F.M."/>
            <person name="Morris S.L."/>
            <person name="Jacobs W.R. Jr."/>
        </authorList>
    </citation>
    <scope>DISRUPTION PHENOTYPE</scope>
    <scope>BIOTECHNOLOGY</scope>
    <source>
        <strain>H37Rv</strain>
    </source>
</reference>
<reference key="4">
    <citation type="journal article" date="2011" name="Mol. Cell. Proteomics">
        <title>Proteogenomic analysis of Mycobacterium tuberculosis by high resolution mass spectrometry.</title>
        <authorList>
            <person name="Kelkar D.S."/>
            <person name="Kumar D."/>
            <person name="Kumar P."/>
            <person name="Balakrishnan L."/>
            <person name="Muthusamy B."/>
            <person name="Yadav A.K."/>
            <person name="Shrivastava P."/>
            <person name="Marimuthu A."/>
            <person name="Anand S."/>
            <person name="Sundaram H."/>
            <person name="Kingsbury R."/>
            <person name="Harsha H.C."/>
            <person name="Nair B."/>
            <person name="Prasad T.S."/>
            <person name="Chauhan D.S."/>
            <person name="Katoch K."/>
            <person name="Katoch V.M."/>
            <person name="Kumar P."/>
            <person name="Chaerkady R."/>
            <person name="Ramachandran S."/>
            <person name="Dash D."/>
            <person name="Pandey A."/>
        </authorList>
    </citation>
    <scope>IDENTIFICATION BY MASS SPECTROMETRY [LARGE SCALE ANALYSIS]</scope>
    <source>
        <strain>ATCC 25618 / H37Rv</strain>
    </source>
</reference>
<reference key="5">
    <citation type="journal article" date="2013" name="Emerg. Microbes Infect.">
        <title>Mutations in panD encoding aspartate decarboxylase are associated with pyrazinamide resistance in Mycobacterium tuberculosis.</title>
        <authorList>
            <person name="Zhang S."/>
            <person name="Chen J."/>
            <person name="Shi W."/>
            <person name="Liu W."/>
            <person name="Zhang W."/>
            <person name="Zhang Y."/>
        </authorList>
    </citation>
    <scope>FUNCTION</scope>
    <scope>POSSIBLE ANTIBIOTIC RESISTANCE</scope>
    <scope>MUTAGENESIS OF HIS-21; ILE-49; ALA-128; GLU-130 AND VAL-138</scope>
    <source>
        <strain>H37Rv</strain>
    </source>
</reference>
<reference key="6">
    <citation type="journal article" date="2014" name="Antimicrob. Agents Chemother.">
        <title>Pantothenate and pantetheine antagonize the antitubercular activity of pyrazinamide.</title>
        <authorList>
            <person name="Dillon N.A."/>
            <person name="Peterson N.D."/>
            <person name="Rosen B.C."/>
            <person name="Baughn A.D."/>
        </authorList>
    </citation>
    <scope>FUNCTION</scope>
    <scope>DISRUPTION PHENOTYPE</scope>
    <source>
        <strain>H37Rv</strain>
    </source>
</reference>
<reference key="7">
    <citation type="journal article" date="2014" name="Emerg. Microbes Infect.">
        <title>Aspartate decarboxylase (PanD) as a new target of pyrazinamide in Mycobacterium tuberculosis.</title>
        <authorList>
            <person name="Shi W."/>
            <person name="Chen J."/>
            <person name="Feng J."/>
            <person name="Cui P."/>
            <person name="Zhang S."/>
            <person name="Weng X."/>
            <person name="Zhang W."/>
            <person name="Zhang Y."/>
        </authorList>
    </citation>
    <scope>POSSIBLE ANTIBIOTIC RESISTANCE</scope>
</reference>
<reference key="8">
    <citation type="journal article" date="2006" name="Proteins">
        <title>Crystal structure of uncleaved L-aspartate-alpha-decarboxylase from Mycobacterium tuberculosis.</title>
        <authorList>
            <person name="Gopalan G."/>
            <person name="Chopra S."/>
            <person name="Ranganathan A."/>
            <person name="Swaminathan K."/>
        </authorList>
    </citation>
    <scope>X-RAY CRYSTALLOGRAPHY (2.99 ANGSTROMS)</scope>
    <source>
        <strain>H37Rv</strain>
    </source>
</reference>
<name>PAND_MYCTU</name>
<feature type="chain" id="PRO_0000023121" description="Aspartate 1-decarboxylase beta chain" evidence="1 7">
    <location>
        <begin position="1"/>
        <end position="24"/>
    </location>
</feature>
<feature type="chain" id="PRO_0000023122" description="Aspartate 1-decarboxylase alpha chain" evidence="1 7">
    <location>
        <begin position="25"/>
        <end position="139"/>
    </location>
</feature>
<feature type="active site" description="Schiff-base intermediate with substrate; via pyruvic acid" evidence="1">
    <location>
        <position position="25"/>
    </location>
</feature>
<feature type="active site" description="Proton donor" evidence="1">
    <location>
        <position position="58"/>
    </location>
</feature>
<feature type="binding site" evidence="1">
    <location>
        <position position="57"/>
    </location>
    <ligand>
        <name>substrate</name>
    </ligand>
</feature>
<feature type="binding site" evidence="1">
    <location>
        <begin position="73"/>
        <end position="75"/>
    </location>
    <ligand>
        <name>substrate</name>
    </ligand>
</feature>
<feature type="modified residue" description="Pyruvic acid (Ser)" evidence="1">
    <location>
        <position position="25"/>
    </location>
</feature>
<feature type="mutagenesis site" description="In S11; may confer PZA resistance; when associated with V-49." evidence="5">
    <original>H</original>
    <variation>R</variation>
    <location>
        <position position="21"/>
    </location>
</feature>
<feature type="mutagenesis site" description="In S11; may confer PZA resistance; when associated with R-21." evidence="5">
    <original>I</original>
    <variation>V</variation>
    <location>
        <position position="49"/>
    </location>
</feature>
<feature type="mutagenesis site" description="In S6; may confer PZA resistance." evidence="5">
    <original>A</original>
    <variation>S</variation>
    <location>
        <position position="128"/>
    </location>
</feature>
<feature type="mutagenesis site" description="In S13; may confer PZA resistance." evidence="5">
    <original>E</original>
    <variation>G</variation>
    <location>
        <position position="130"/>
    </location>
</feature>
<feature type="mutagenesis site" description="In S9, S10; may confer PZA resistance." evidence="5">
    <original>V</original>
    <variation>A</variation>
    <location>
        <position position="138"/>
    </location>
</feature>
<feature type="strand" evidence="8">
    <location>
        <begin position="2"/>
        <end position="4"/>
    </location>
</feature>
<feature type="strand" evidence="8">
    <location>
        <begin position="8"/>
        <end position="14"/>
    </location>
</feature>
<feature type="strand" evidence="8">
    <location>
        <begin position="18"/>
        <end position="22"/>
    </location>
</feature>
<feature type="strand" evidence="8">
    <location>
        <begin position="25"/>
        <end position="29"/>
    </location>
</feature>
<feature type="helix" evidence="8">
    <location>
        <begin position="30"/>
        <end position="35"/>
    </location>
</feature>
<feature type="strand" evidence="8">
    <location>
        <begin position="44"/>
        <end position="48"/>
    </location>
</feature>
<feature type="turn" evidence="8">
    <location>
        <begin position="49"/>
        <end position="51"/>
    </location>
</feature>
<feature type="strand" evidence="8">
    <location>
        <begin position="54"/>
        <end position="57"/>
    </location>
</feature>
<feature type="strand" evidence="8">
    <location>
        <begin position="59"/>
        <end position="62"/>
    </location>
</feature>
<feature type="turn" evidence="8">
    <location>
        <begin position="64"/>
        <end position="67"/>
    </location>
</feature>
<feature type="strand" evidence="8">
    <location>
        <begin position="69"/>
        <end position="74"/>
    </location>
</feature>
<feature type="turn" evidence="8">
    <location>
        <begin position="75"/>
        <end position="78"/>
    </location>
</feature>
<feature type="strand" evidence="8">
    <location>
        <begin position="84"/>
        <end position="89"/>
    </location>
</feature>
<feature type="strand" evidence="8">
    <location>
        <begin position="92"/>
        <end position="94"/>
    </location>
</feature>
<feature type="helix" evidence="8">
    <location>
        <begin position="95"/>
        <end position="99"/>
    </location>
</feature>
<feature type="strand" evidence="8">
    <location>
        <begin position="104"/>
        <end position="107"/>
    </location>
</feature>
<organism>
    <name type="scientific">Mycobacterium tuberculosis (strain ATCC 25618 / H37Rv)</name>
    <dbReference type="NCBI Taxonomy" id="83332"/>
    <lineage>
        <taxon>Bacteria</taxon>
        <taxon>Bacillati</taxon>
        <taxon>Actinomycetota</taxon>
        <taxon>Actinomycetes</taxon>
        <taxon>Mycobacteriales</taxon>
        <taxon>Mycobacteriaceae</taxon>
        <taxon>Mycobacterium</taxon>
        <taxon>Mycobacterium tuberculosis complex</taxon>
    </lineage>
</organism>
<dbReference type="EC" id="4.1.1.11" evidence="1 2"/>
<dbReference type="EMBL" id="AL123456">
    <property type="protein sequence ID" value="CCP46424.1"/>
    <property type="molecule type" value="Genomic_DNA"/>
</dbReference>
<dbReference type="PIR" id="B70955">
    <property type="entry name" value="B70955"/>
</dbReference>
<dbReference type="RefSeq" id="NP_218118.1">
    <property type="nucleotide sequence ID" value="NC_000962.3"/>
</dbReference>
<dbReference type="RefSeq" id="WP_003419523.1">
    <property type="nucleotide sequence ID" value="NZ_NVQJ01000056.1"/>
</dbReference>
<dbReference type="PDB" id="2C45">
    <property type="method" value="X-ray"/>
    <property type="resolution" value="2.99 A"/>
    <property type="chains" value="A/B/C/D/E/F/G/H=1-139"/>
</dbReference>
<dbReference type="PDBsum" id="2C45"/>
<dbReference type="SMR" id="P9WIL3"/>
<dbReference type="FunCoup" id="P9WIL3">
    <property type="interactions" value="135"/>
</dbReference>
<dbReference type="STRING" id="83332.Rv3601c"/>
<dbReference type="PaxDb" id="83332-Rv3601c"/>
<dbReference type="DNASU" id="885596"/>
<dbReference type="GeneID" id="885596"/>
<dbReference type="KEGG" id="mtu:Rv3601c"/>
<dbReference type="KEGG" id="mtv:RVBD_3601c"/>
<dbReference type="TubercuList" id="Rv3601c"/>
<dbReference type="eggNOG" id="COG0853">
    <property type="taxonomic scope" value="Bacteria"/>
</dbReference>
<dbReference type="InParanoid" id="P9WIL3"/>
<dbReference type="OrthoDB" id="9803983at2"/>
<dbReference type="PhylomeDB" id="P9WIL3"/>
<dbReference type="UniPathway" id="UPA00028">
    <property type="reaction ID" value="UER00002"/>
</dbReference>
<dbReference type="EvolutionaryTrace" id="P9WIL3"/>
<dbReference type="Proteomes" id="UP000001584">
    <property type="component" value="Chromosome"/>
</dbReference>
<dbReference type="GO" id="GO:0005829">
    <property type="term" value="C:cytosol"/>
    <property type="evidence" value="ECO:0000314"/>
    <property type="project" value="MTBBASE"/>
</dbReference>
<dbReference type="GO" id="GO:0009274">
    <property type="term" value="C:peptidoglycan-based cell wall"/>
    <property type="evidence" value="ECO:0000314"/>
    <property type="project" value="MTBBASE"/>
</dbReference>
<dbReference type="GO" id="GO:0004068">
    <property type="term" value="F:aspartate 1-decarboxylase activity"/>
    <property type="evidence" value="ECO:0000314"/>
    <property type="project" value="MTBBASE"/>
</dbReference>
<dbReference type="GO" id="GO:0006523">
    <property type="term" value="P:alanine biosynthetic process"/>
    <property type="evidence" value="ECO:0000314"/>
    <property type="project" value="MTBBASE"/>
</dbReference>
<dbReference type="GO" id="GO:0015940">
    <property type="term" value="P:pantothenate biosynthetic process"/>
    <property type="evidence" value="ECO:0000314"/>
    <property type="project" value="MTBBASE"/>
</dbReference>
<dbReference type="CDD" id="cd06919">
    <property type="entry name" value="Asp_decarbox"/>
    <property type="match status" value="1"/>
</dbReference>
<dbReference type="Gene3D" id="2.40.40.20">
    <property type="match status" value="1"/>
</dbReference>
<dbReference type="HAMAP" id="MF_00446">
    <property type="entry name" value="PanD"/>
    <property type="match status" value="1"/>
</dbReference>
<dbReference type="InterPro" id="IPR009010">
    <property type="entry name" value="Asp_de-COase-like_dom_sf"/>
</dbReference>
<dbReference type="InterPro" id="IPR003190">
    <property type="entry name" value="Asp_decarbox"/>
</dbReference>
<dbReference type="NCBIfam" id="TIGR00223">
    <property type="entry name" value="panD"/>
    <property type="match status" value="1"/>
</dbReference>
<dbReference type="PANTHER" id="PTHR21012">
    <property type="entry name" value="ASPARTATE 1-DECARBOXYLASE"/>
    <property type="match status" value="1"/>
</dbReference>
<dbReference type="PANTHER" id="PTHR21012:SF0">
    <property type="entry name" value="ASPARTATE 1-DECARBOXYLASE"/>
    <property type="match status" value="1"/>
</dbReference>
<dbReference type="Pfam" id="PF02261">
    <property type="entry name" value="Asp_decarbox"/>
    <property type="match status" value="1"/>
</dbReference>
<dbReference type="PIRSF" id="PIRSF006246">
    <property type="entry name" value="Asp_decarbox"/>
    <property type="match status" value="1"/>
</dbReference>
<dbReference type="SUPFAM" id="SSF50692">
    <property type="entry name" value="ADC-like"/>
    <property type="match status" value="1"/>
</dbReference>
<gene>
    <name evidence="1" type="primary">panD</name>
    <name type="ordered locus">Rv3601c</name>
    <name type="ORF">MTCY07H7B.21</name>
</gene>